<feature type="chain" id="PRO_1000141985" description="Large ribosomal subunit protein uL24">
    <location>
        <begin position="1"/>
        <end position="107"/>
    </location>
</feature>
<organism>
    <name type="scientific">Coxiella burnetii (strain CbuG_Q212)</name>
    <name type="common">Coxiella burnetii (strain Q212)</name>
    <dbReference type="NCBI Taxonomy" id="434923"/>
    <lineage>
        <taxon>Bacteria</taxon>
        <taxon>Pseudomonadati</taxon>
        <taxon>Pseudomonadota</taxon>
        <taxon>Gammaproteobacteria</taxon>
        <taxon>Legionellales</taxon>
        <taxon>Coxiellaceae</taxon>
        <taxon>Coxiella</taxon>
    </lineage>
</organism>
<dbReference type="EMBL" id="CP001019">
    <property type="protein sequence ID" value="ACJ19030.1"/>
    <property type="molecule type" value="Genomic_DNA"/>
</dbReference>
<dbReference type="RefSeq" id="WP_005771523.1">
    <property type="nucleotide sequence ID" value="NC_011527.1"/>
</dbReference>
<dbReference type="SMR" id="B6J252"/>
<dbReference type="KEGG" id="cbg:CbuG_1756"/>
<dbReference type="HOGENOM" id="CLU_093315_2_2_6"/>
<dbReference type="GO" id="GO:1990904">
    <property type="term" value="C:ribonucleoprotein complex"/>
    <property type="evidence" value="ECO:0007669"/>
    <property type="project" value="UniProtKB-KW"/>
</dbReference>
<dbReference type="GO" id="GO:0005840">
    <property type="term" value="C:ribosome"/>
    <property type="evidence" value="ECO:0007669"/>
    <property type="project" value="UniProtKB-KW"/>
</dbReference>
<dbReference type="GO" id="GO:0019843">
    <property type="term" value="F:rRNA binding"/>
    <property type="evidence" value="ECO:0007669"/>
    <property type="project" value="UniProtKB-UniRule"/>
</dbReference>
<dbReference type="GO" id="GO:0003735">
    <property type="term" value="F:structural constituent of ribosome"/>
    <property type="evidence" value="ECO:0007669"/>
    <property type="project" value="InterPro"/>
</dbReference>
<dbReference type="GO" id="GO:0006412">
    <property type="term" value="P:translation"/>
    <property type="evidence" value="ECO:0007669"/>
    <property type="project" value="UniProtKB-UniRule"/>
</dbReference>
<dbReference type="CDD" id="cd06089">
    <property type="entry name" value="KOW_RPL26"/>
    <property type="match status" value="1"/>
</dbReference>
<dbReference type="FunFam" id="2.30.30.30:FF:000004">
    <property type="entry name" value="50S ribosomal protein L24"/>
    <property type="match status" value="1"/>
</dbReference>
<dbReference type="Gene3D" id="2.30.30.30">
    <property type="match status" value="1"/>
</dbReference>
<dbReference type="HAMAP" id="MF_01326_B">
    <property type="entry name" value="Ribosomal_uL24_B"/>
    <property type="match status" value="1"/>
</dbReference>
<dbReference type="InterPro" id="IPR005824">
    <property type="entry name" value="KOW"/>
</dbReference>
<dbReference type="InterPro" id="IPR014722">
    <property type="entry name" value="Rib_uL2_dom2"/>
</dbReference>
<dbReference type="InterPro" id="IPR003256">
    <property type="entry name" value="Ribosomal_uL24"/>
</dbReference>
<dbReference type="InterPro" id="IPR005825">
    <property type="entry name" value="Ribosomal_uL24_CS"/>
</dbReference>
<dbReference type="InterPro" id="IPR041988">
    <property type="entry name" value="Ribosomal_uL24_KOW"/>
</dbReference>
<dbReference type="InterPro" id="IPR008991">
    <property type="entry name" value="Translation_prot_SH3-like_sf"/>
</dbReference>
<dbReference type="NCBIfam" id="TIGR01079">
    <property type="entry name" value="rplX_bact"/>
    <property type="match status" value="1"/>
</dbReference>
<dbReference type="PANTHER" id="PTHR12903">
    <property type="entry name" value="MITOCHONDRIAL RIBOSOMAL PROTEIN L24"/>
    <property type="match status" value="1"/>
</dbReference>
<dbReference type="Pfam" id="PF00467">
    <property type="entry name" value="KOW"/>
    <property type="match status" value="1"/>
</dbReference>
<dbReference type="Pfam" id="PF17136">
    <property type="entry name" value="ribosomal_L24"/>
    <property type="match status" value="1"/>
</dbReference>
<dbReference type="SMART" id="SM00739">
    <property type="entry name" value="KOW"/>
    <property type="match status" value="1"/>
</dbReference>
<dbReference type="SUPFAM" id="SSF50104">
    <property type="entry name" value="Translation proteins SH3-like domain"/>
    <property type="match status" value="1"/>
</dbReference>
<dbReference type="PROSITE" id="PS01108">
    <property type="entry name" value="RIBOSOMAL_L24"/>
    <property type="match status" value="1"/>
</dbReference>
<reference key="1">
    <citation type="journal article" date="2009" name="Infect. Immun.">
        <title>Comparative genomics reveal extensive transposon-mediated genomic plasticity and diversity among potential effector proteins within the genus Coxiella.</title>
        <authorList>
            <person name="Beare P.A."/>
            <person name="Unsworth N."/>
            <person name="Andoh M."/>
            <person name="Voth D.E."/>
            <person name="Omsland A."/>
            <person name="Gilk S.D."/>
            <person name="Williams K.P."/>
            <person name="Sobral B.W."/>
            <person name="Kupko J.J. III"/>
            <person name="Porcella S.F."/>
            <person name="Samuel J.E."/>
            <person name="Heinzen R.A."/>
        </authorList>
    </citation>
    <scope>NUCLEOTIDE SEQUENCE [LARGE SCALE GENOMIC DNA]</scope>
    <source>
        <strain>CbuG_Q212</strain>
    </source>
</reference>
<protein>
    <recommendedName>
        <fullName evidence="1">Large ribosomal subunit protein uL24</fullName>
    </recommendedName>
    <alternativeName>
        <fullName evidence="2">50S ribosomal protein L24</fullName>
    </alternativeName>
</protein>
<keyword id="KW-0687">Ribonucleoprotein</keyword>
<keyword id="KW-0689">Ribosomal protein</keyword>
<keyword id="KW-0694">RNA-binding</keyword>
<keyword id="KW-0699">rRNA-binding</keyword>
<accession>B6J252</accession>
<sequence>MAIKKIKKDDTVIVITGRDKGRQGKVLKVLPNSRLLVEGINLVKKHVKPNPNKNEQGGILERELSIHVSNVAIYNPAAKKADRVGIKTLEDGSKVRIFKSNGEVIDV</sequence>
<proteinExistence type="inferred from homology"/>
<evidence type="ECO:0000255" key="1">
    <source>
        <dbReference type="HAMAP-Rule" id="MF_01326"/>
    </source>
</evidence>
<evidence type="ECO:0000305" key="2"/>
<comment type="function">
    <text evidence="1">One of two assembly initiator proteins, it binds directly to the 5'-end of the 23S rRNA, where it nucleates assembly of the 50S subunit.</text>
</comment>
<comment type="function">
    <text evidence="1">One of the proteins that surrounds the polypeptide exit tunnel on the outside of the subunit.</text>
</comment>
<comment type="subunit">
    <text evidence="1">Part of the 50S ribosomal subunit.</text>
</comment>
<comment type="similarity">
    <text evidence="1">Belongs to the universal ribosomal protein uL24 family.</text>
</comment>
<name>RL24_COXB2</name>
<gene>
    <name evidence="1" type="primary">rplX</name>
    <name type="ordered locus">CbuG_1756</name>
</gene>